<proteinExistence type="inferred from homology"/>
<accession>Q815I3</accession>
<evidence type="ECO:0000255" key="1">
    <source>
        <dbReference type="HAMAP-Rule" id="MF_00204"/>
    </source>
</evidence>
<sequence length="658" mass="75180">MERQFEIVSAYSPQGDQPVAIEKLVEGINSGKKKQVLLGATGTGKTFTISNVIKEVQKPTLVMAHNKTLAGQLYSELKDFFPNNAVEYFVSYYDYYQPEAYVPQTDTFIEKDAQINDEIDKLRHSATSALFERDDVIIVASVSCIYGLGSPEEYRELVVSLRVGMEKDRNQLLRELVDVQYGRNDIDFKRGTFRVRGDVVEIFPASLDEHCIRIEFFGDEIDRIREVNALTGEVLAEREHVAIFPASHFVTREEKMKVAIENIEKELEERLKELNENGKLLEAQRIEQRTRYDLEMMREMGFCSGIENYSRHLTLRPAGATPYTLLDYFPKDFLIVMDESHVSVPQVRAMYNGDQARKQVLVDHGFRLPSALDNRPLTFDEFEEKTNQVIYVSATPGPYELEQSPEVIEQIIRPTGLLDPPIDIRPIEGQIDDLLGEIQDRIAKNERVLITTLTKKMSEDLTDYLKDVGIKVTYLHSEIKTLERIEIIRDLRLGKFDVLVGINLLREGLDIPEVSLVAILDADKEGFLRSERSLIQTIGRAARNENGRVIMYADRITKSMGIAIEETKRRRSIQEAYNEEHGITPKTIQKGVRDVIRATTAAEEIETYEATPAKKMTKKEREKTIAKMEAEMKEAAKALDFERAAELRDLLLELKAEG</sequence>
<protein>
    <recommendedName>
        <fullName evidence="1">UvrABC system protein B</fullName>
        <shortName evidence="1">Protein UvrB</shortName>
    </recommendedName>
    <alternativeName>
        <fullName evidence="1">Excinuclease ABC subunit B</fullName>
    </alternativeName>
</protein>
<organism>
    <name type="scientific">Bacillus cereus (strain ATCC 14579 / DSM 31 / CCUG 7414 / JCM 2152 / NBRC 15305 / NCIMB 9373 / NCTC 2599 / NRRL B-3711)</name>
    <dbReference type="NCBI Taxonomy" id="226900"/>
    <lineage>
        <taxon>Bacteria</taxon>
        <taxon>Bacillati</taxon>
        <taxon>Bacillota</taxon>
        <taxon>Bacilli</taxon>
        <taxon>Bacillales</taxon>
        <taxon>Bacillaceae</taxon>
        <taxon>Bacillus</taxon>
        <taxon>Bacillus cereus group</taxon>
    </lineage>
</organism>
<dbReference type="EMBL" id="AE016877">
    <property type="protein sequence ID" value="AAP12033.1"/>
    <property type="molecule type" value="Genomic_DNA"/>
</dbReference>
<dbReference type="RefSeq" id="NP_834832.1">
    <property type="nucleotide sequence ID" value="NC_004722.1"/>
</dbReference>
<dbReference type="RefSeq" id="WP_000441064.1">
    <property type="nucleotide sequence ID" value="NC_004722.1"/>
</dbReference>
<dbReference type="SMR" id="Q815I3"/>
<dbReference type="STRING" id="226900.BC_5168"/>
<dbReference type="KEGG" id="bce:BC5168"/>
<dbReference type="PATRIC" id="fig|226900.8.peg.5326"/>
<dbReference type="HOGENOM" id="CLU_009621_2_1_9"/>
<dbReference type="OrthoDB" id="9806651at2"/>
<dbReference type="Proteomes" id="UP000001417">
    <property type="component" value="Chromosome"/>
</dbReference>
<dbReference type="GO" id="GO:0005737">
    <property type="term" value="C:cytoplasm"/>
    <property type="evidence" value="ECO:0007669"/>
    <property type="project" value="UniProtKB-SubCell"/>
</dbReference>
<dbReference type="GO" id="GO:0009380">
    <property type="term" value="C:excinuclease repair complex"/>
    <property type="evidence" value="ECO:0000318"/>
    <property type="project" value="GO_Central"/>
</dbReference>
<dbReference type="GO" id="GO:0005524">
    <property type="term" value="F:ATP binding"/>
    <property type="evidence" value="ECO:0007669"/>
    <property type="project" value="UniProtKB-UniRule"/>
</dbReference>
<dbReference type="GO" id="GO:0016887">
    <property type="term" value="F:ATP hydrolysis activity"/>
    <property type="evidence" value="ECO:0007669"/>
    <property type="project" value="InterPro"/>
</dbReference>
<dbReference type="GO" id="GO:0003677">
    <property type="term" value="F:DNA binding"/>
    <property type="evidence" value="ECO:0007669"/>
    <property type="project" value="UniProtKB-UniRule"/>
</dbReference>
<dbReference type="GO" id="GO:0009381">
    <property type="term" value="F:excinuclease ABC activity"/>
    <property type="evidence" value="ECO:0007669"/>
    <property type="project" value="UniProtKB-UniRule"/>
</dbReference>
<dbReference type="GO" id="GO:0000715">
    <property type="term" value="P:nucleotide-excision repair, DNA damage recognition"/>
    <property type="evidence" value="ECO:0000318"/>
    <property type="project" value="GO_Central"/>
</dbReference>
<dbReference type="GO" id="GO:0009432">
    <property type="term" value="P:SOS response"/>
    <property type="evidence" value="ECO:0007669"/>
    <property type="project" value="UniProtKB-UniRule"/>
</dbReference>
<dbReference type="CDD" id="cd17916">
    <property type="entry name" value="DEXHc_UvrB"/>
    <property type="match status" value="1"/>
</dbReference>
<dbReference type="CDD" id="cd18790">
    <property type="entry name" value="SF2_C_UvrB"/>
    <property type="match status" value="1"/>
</dbReference>
<dbReference type="Gene3D" id="6.10.140.240">
    <property type="match status" value="1"/>
</dbReference>
<dbReference type="Gene3D" id="3.40.50.300">
    <property type="entry name" value="P-loop containing nucleotide triphosphate hydrolases"/>
    <property type="match status" value="3"/>
</dbReference>
<dbReference type="Gene3D" id="4.10.860.10">
    <property type="entry name" value="UVR domain"/>
    <property type="match status" value="1"/>
</dbReference>
<dbReference type="HAMAP" id="MF_00204">
    <property type="entry name" value="UvrB"/>
    <property type="match status" value="1"/>
</dbReference>
<dbReference type="InterPro" id="IPR006935">
    <property type="entry name" value="Helicase/UvrB_N"/>
</dbReference>
<dbReference type="InterPro" id="IPR014001">
    <property type="entry name" value="Helicase_ATP-bd"/>
</dbReference>
<dbReference type="InterPro" id="IPR001650">
    <property type="entry name" value="Helicase_C-like"/>
</dbReference>
<dbReference type="InterPro" id="IPR027417">
    <property type="entry name" value="P-loop_NTPase"/>
</dbReference>
<dbReference type="InterPro" id="IPR001943">
    <property type="entry name" value="UVR_dom"/>
</dbReference>
<dbReference type="InterPro" id="IPR036876">
    <property type="entry name" value="UVR_dom_sf"/>
</dbReference>
<dbReference type="InterPro" id="IPR004807">
    <property type="entry name" value="UvrB"/>
</dbReference>
<dbReference type="InterPro" id="IPR041471">
    <property type="entry name" value="UvrB_inter"/>
</dbReference>
<dbReference type="InterPro" id="IPR024759">
    <property type="entry name" value="UvrB_YAD/RRR_dom"/>
</dbReference>
<dbReference type="NCBIfam" id="NF003673">
    <property type="entry name" value="PRK05298.1"/>
    <property type="match status" value="1"/>
</dbReference>
<dbReference type="NCBIfam" id="TIGR00631">
    <property type="entry name" value="uvrb"/>
    <property type="match status" value="1"/>
</dbReference>
<dbReference type="PANTHER" id="PTHR24029">
    <property type="entry name" value="UVRABC SYSTEM PROTEIN B"/>
    <property type="match status" value="1"/>
</dbReference>
<dbReference type="PANTHER" id="PTHR24029:SF0">
    <property type="entry name" value="UVRABC SYSTEM PROTEIN B"/>
    <property type="match status" value="1"/>
</dbReference>
<dbReference type="Pfam" id="PF00271">
    <property type="entry name" value="Helicase_C"/>
    <property type="match status" value="1"/>
</dbReference>
<dbReference type="Pfam" id="PF04851">
    <property type="entry name" value="ResIII"/>
    <property type="match status" value="1"/>
</dbReference>
<dbReference type="Pfam" id="PF02151">
    <property type="entry name" value="UVR"/>
    <property type="match status" value="1"/>
</dbReference>
<dbReference type="Pfam" id="PF12344">
    <property type="entry name" value="UvrB"/>
    <property type="match status" value="1"/>
</dbReference>
<dbReference type="Pfam" id="PF17757">
    <property type="entry name" value="UvrB_inter"/>
    <property type="match status" value="1"/>
</dbReference>
<dbReference type="SMART" id="SM00487">
    <property type="entry name" value="DEXDc"/>
    <property type="match status" value="1"/>
</dbReference>
<dbReference type="SMART" id="SM00490">
    <property type="entry name" value="HELICc"/>
    <property type="match status" value="1"/>
</dbReference>
<dbReference type="SUPFAM" id="SSF46600">
    <property type="entry name" value="C-terminal UvrC-binding domain of UvrB"/>
    <property type="match status" value="1"/>
</dbReference>
<dbReference type="SUPFAM" id="SSF52540">
    <property type="entry name" value="P-loop containing nucleoside triphosphate hydrolases"/>
    <property type="match status" value="2"/>
</dbReference>
<dbReference type="PROSITE" id="PS51192">
    <property type="entry name" value="HELICASE_ATP_BIND_1"/>
    <property type="match status" value="1"/>
</dbReference>
<dbReference type="PROSITE" id="PS51194">
    <property type="entry name" value="HELICASE_CTER"/>
    <property type="match status" value="1"/>
</dbReference>
<dbReference type="PROSITE" id="PS50151">
    <property type="entry name" value="UVR"/>
    <property type="match status" value="1"/>
</dbReference>
<keyword id="KW-0067">ATP-binding</keyword>
<keyword id="KW-0963">Cytoplasm</keyword>
<keyword id="KW-0227">DNA damage</keyword>
<keyword id="KW-0228">DNA excision</keyword>
<keyword id="KW-0234">DNA repair</keyword>
<keyword id="KW-0267">Excision nuclease</keyword>
<keyword id="KW-0547">Nucleotide-binding</keyword>
<keyword id="KW-1185">Reference proteome</keyword>
<keyword id="KW-0742">SOS response</keyword>
<reference key="1">
    <citation type="journal article" date="2003" name="Nature">
        <title>Genome sequence of Bacillus cereus and comparative analysis with Bacillus anthracis.</title>
        <authorList>
            <person name="Ivanova N."/>
            <person name="Sorokin A."/>
            <person name="Anderson I."/>
            <person name="Galleron N."/>
            <person name="Candelon B."/>
            <person name="Kapatral V."/>
            <person name="Bhattacharyya A."/>
            <person name="Reznik G."/>
            <person name="Mikhailova N."/>
            <person name="Lapidus A."/>
            <person name="Chu L."/>
            <person name="Mazur M."/>
            <person name="Goltsman E."/>
            <person name="Larsen N."/>
            <person name="D'Souza M."/>
            <person name="Walunas T."/>
            <person name="Grechkin Y."/>
            <person name="Pusch G."/>
            <person name="Haselkorn R."/>
            <person name="Fonstein M."/>
            <person name="Ehrlich S.D."/>
            <person name="Overbeek R."/>
            <person name="Kyrpides N.C."/>
        </authorList>
    </citation>
    <scope>NUCLEOTIDE SEQUENCE [LARGE SCALE GENOMIC DNA]</scope>
    <source>
        <strain>ATCC 14579 / DSM 31 / CCUG 7414 / JCM 2152 / NBRC 15305 / NCIMB 9373 / NCTC 2599 / NRRL B-3711</strain>
    </source>
</reference>
<name>UVRB_BACCR</name>
<gene>
    <name evidence="1" type="primary">uvrB</name>
    <name type="ordered locus">BC_5168</name>
</gene>
<feature type="chain" id="PRO_0000227281" description="UvrABC system protein B">
    <location>
        <begin position="1"/>
        <end position="658"/>
    </location>
</feature>
<feature type="domain" description="Helicase ATP-binding" evidence="1">
    <location>
        <begin position="26"/>
        <end position="413"/>
    </location>
</feature>
<feature type="domain" description="Helicase C-terminal" evidence="1">
    <location>
        <begin position="430"/>
        <end position="596"/>
    </location>
</feature>
<feature type="domain" description="UVR" evidence="1">
    <location>
        <begin position="622"/>
        <end position="657"/>
    </location>
</feature>
<feature type="short sequence motif" description="Beta-hairpin">
    <location>
        <begin position="92"/>
        <end position="115"/>
    </location>
</feature>
<feature type="binding site" evidence="1">
    <location>
        <begin position="39"/>
        <end position="46"/>
    </location>
    <ligand>
        <name>ATP</name>
        <dbReference type="ChEBI" id="CHEBI:30616"/>
    </ligand>
</feature>
<comment type="function">
    <text evidence="1">The UvrABC repair system catalyzes the recognition and processing of DNA lesions. A damage recognition complex composed of 2 UvrA and 2 UvrB subunits scans DNA for abnormalities. Upon binding of the UvrA(2)B(2) complex to a putative damaged site, the DNA wraps around one UvrB monomer. DNA wrap is dependent on ATP binding by UvrB and probably causes local melting of the DNA helix, facilitating insertion of UvrB beta-hairpin between the DNA strands. Then UvrB probes one DNA strand for the presence of a lesion. If a lesion is found the UvrA subunits dissociate and the UvrB-DNA preincision complex is formed. This complex is subsequently bound by UvrC and the second UvrB is released. If no lesion is found, the DNA wraps around the other UvrB subunit that will check the other stand for damage.</text>
</comment>
<comment type="subunit">
    <text evidence="1">Forms a heterotetramer with UvrA during the search for lesions. Interacts with UvrC in an incision complex.</text>
</comment>
<comment type="subcellular location">
    <subcellularLocation>
        <location evidence="1">Cytoplasm</location>
    </subcellularLocation>
</comment>
<comment type="domain">
    <text evidence="1">The beta-hairpin motif is involved in DNA binding.</text>
</comment>
<comment type="similarity">
    <text evidence="1">Belongs to the UvrB family.</text>
</comment>